<name>KAD_TRIEI</name>
<accession>Q110C6</accession>
<keyword id="KW-0067">ATP-binding</keyword>
<keyword id="KW-0963">Cytoplasm</keyword>
<keyword id="KW-0418">Kinase</keyword>
<keyword id="KW-0545">Nucleotide biosynthesis</keyword>
<keyword id="KW-0547">Nucleotide-binding</keyword>
<keyword id="KW-0808">Transferase</keyword>
<evidence type="ECO:0000255" key="1">
    <source>
        <dbReference type="HAMAP-Rule" id="MF_00235"/>
    </source>
</evidence>
<feature type="chain" id="PRO_1000058932" description="Adenylate kinase">
    <location>
        <begin position="1"/>
        <end position="191"/>
    </location>
</feature>
<feature type="region of interest" description="NMP" evidence="1">
    <location>
        <begin position="31"/>
        <end position="60"/>
    </location>
</feature>
<feature type="region of interest" description="LID" evidence="1">
    <location>
        <begin position="132"/>
        <end position="138"/>
    </location>
</feature>
<feature type="binding site" evidence="1">
    <location>
        <begin position="11"/>
        <end position="16"/>
    </location>
    <ligand>
        <name>ATP</name>
        <dbReference type="ChEBI" id="CHEBI:30616"/>
    </ligand>
</feature>
<feature type="binding site" evidence="1">
    <location>
        <position position="32"/>
    </location>
    <ligand>
        <name>AMP</name>
        <dbReference type="ChEBI" id="CHEBI:456215"/>
    </ligand>
</feature>
<feature type="binding site" evidence="1">
    <location>
        <position position="37"/>
    </location>
    <ligand>
        <name>AMP</name>
        <dbReference type="ChEBI" id="CHEBI:456215"/>
    </ligand>
</feature>
<feature type="binding site" evidence="1">
    <location>
        <begin position="58"/>
        <end position="60"/>
    </location>
    <ligand>
        <name>AMP</name>
        <dbReference type="ChEBI" id="CHEBI:456215"/>
    </ligand>
</feature>
<feature type="binding site" evidence="1">
    <location>
        <begin position="86"/>
        <end position="89"/>
    </location>
    <ligand>
        <name>AMP</name>
        <dbReference type="ChEBI" id="CHEBI:456215"/>
    </ligand>
</feature>
<feature type="binding site" evidence="1">
    <location>
        <position position="93"/>
    </location>
    <ligand>
        <name>AMP</name>
        <dbReference type="ChEBI" id="CHEBI:456215"/>
    </ligand>
</feature>
<feature type="binding site" evidence="1">
    <location>
        <position position="133"/>
    </location>
    <ligand>
        <name>ATP</name>
        <dbReference type="ChEBI" id="CHEBI:30616"/>
    </ligand>
</feature>
<feature type="binding site" evidence="1">
    <location>
        <position position="135"/>
    </location>
    <ligand>
        <name>AMP</name>
        <dbReference type="ChEBI" id="CHEBI:456215"/>
    </ligand>
</feature>
<feature type="binding site" evidence="1">
    <location>
        <position position="146"/>
    </location>
    <ligand>
        <name>AMP</name>
        <dbReference type="ChEBI" id="CHEBI:456215"/>
    </ligand>
</feature>
<feature type="binding site" evidence="1">
    <location>
        <position position="174"/>
    </location>
    <ligand>
        <name>ATP</name>
        <dbReference type="ChEBI" id="CHEBI:30616"/>
    </ligand>
</feature>
<protein>
    <recommendedName>
        <fullName evidence="1">Adenylate kinase</fullName>
        <shortName evidence="1">AK</shortName>
        <ecNumber evidence="1">2.7.4.3</ecNumber>
    </recommendedName>
    <alternativeName>
        <fullName evidence="1">ATP-AMP transphosphorylase</fullName>
    </alternativeName>
    <alternativeName>
        <fullName evidence="1">ATP:AMP phosphotransferase</fullName>
    </alternativeName>
    <alternativeName>
        <fullName evidence="1">Adenylate monophosphate kinase</fullName>
    </alternativeName>
</protein>
<reference key="1">
    <citation type="journal article" date="2015" name="Proc. Natl. Acad. Sci. U.S.A.">
        <title>Trichodesmium genome maintains abundant, widespread noncoding DNA in situ, despite oligotrophic lifestyle.</title>
        <authorList>
            <person name="Walworth N."/>
            <person name="Pfreundt U."/>
            <person name="Nelson W.C."/>
            <person name="Mincer T."/>
            <person name="Heidelberg J.F."/>
            <person name="Fu F."/>
            <person name="Waterbury J.B."/>
            <person name="Glavina del Rio T."/>
            <person name="Goodwin L."/>
            <person name="Kyrpides N.C."/>
            <person name="Land M.L."/>
            <person name="Woyke T."/>
            <person name="Hutchins D.A."/>
            <person name="Hess W.R."/>
            <person name="Webb E.A."/>
        </authorList>
    </citation>
    <scope>NUCLEOTIDE SEQUENCE [LARGE SCALE GENOMIC DNA]</scope>
    <source>
        <strain>IMS101</strain>
    </source>
</reference>
<proteinExistence type="inferred from homology"/>
<comment type="function">
    <text evidence="1">Catalyzes the reversible transfer of the terminal phosphate group between ATP and AMP. Plays an important role in cellular energy homeostasis and in adenine nucleotide metabolism.</text>
</comment>
<comment type="catalytic activity">
    <reaction evidence="1">
        <text>AMP + ATP = 2 ADP</text>
        <dbReference type="Rhea" id="RHEA:12973"/>
        <dbReference type="ChEBI" id="CHEBI:30616"/>
        <dbReference type="ChEBI" id="CHEBI:456215"/>
        <dbReference type="ChEBI" id="CHEBI:456216"/>
        <dbReference type="EC" id="2.7.4.3"/>
    </reaction>
</comment>
<comment type="pathway">
    <text evidence="1">Purine metabolism; AMP biosynthesis via salvage pathway; AMP from ADP: step 1/1.</text>
</comment>
<comment type="subunit">
    <text evidence="1">Monomer.</text>
</comment>
<comment type="subcellular location">
    <subcellularLocation>
        <location evidence="1">Cytoplasm</location>
    </subcellularLocation>
</comment>
<comment type="domain">
    <text evidence="1">Consists of three domains, a large central CORE domain and two small peripheral domains, NMPbind and LID, which undergo movements during catalysis. The LID domain closes over the site of phosphoryl transfer upon ATP binding. Assembling and dissambling the active center during each catalytic cycle provides an effective means to prevent ATP hydrolysis.</text>
</comment>
<comment type="similarity">
    <text evidence="1">Belongs to the adenylate kinase family.</text>
</comment>
<sequence>MVKLVFLGPPGAGKGTQASLIADFYKVPHISTGDILRSNVAERSPLGIKAKDYMDKGDLVPDQLILDMVKERLENPNAQNGWILDGFPRTVTQAEEFFKKYESEGEEAKSSSSFHVINLQVPDDVLVARLLSRKREDDQEETIRNRLQVYYQQTQPLIEFYQAREQLIIIDGNNPIETVTNAIKQEVDKIT</sequence>
<dbReference type="EC" id="2.7.4.3" evidence="1"/>
<dbReference type="EMBL" id="CP000393">
    <property type="protein sequence ID" value="ABG52148.1"/>
    <property type="molecule type" value="Genomic_DNA"/>
</dbReference>
<dbReference type="RefSeq" id="WP_011612503.1">
    <property type="nucleotide sequence ID" value="NC_008312.1"/>
</dbReference>
<dbReference type="SMR" id="Q110C6"/>
<dbReference type="STRING" id="203124.Tery_2993"/>
<dbReference type="KEGG" id="ter:Tery_2993"/>
<dbReference type="eggNOG" id="COG0563">
    <property type="taxonomic scope" value="Bacteria"/>
</dbReference>
<dbReference type="HOGENOM" id="CLU_032354_1_2_3"/>
<dbReference type="OrthoDB" id="9805030at2"/>
<dbReference type="UniPathway" id="UPA00588">
    <property type="reaction ID" value="UER00649"/>
</dbReference>
<dbReference type="GO" id="GO:0005737">
    <property type="term" value="C:cytoplasm"/>
    <property type="evidence" value="ECO:0007669"/>
    <property type="project" value="UniProtKB-SubCell"/>
</dbReference>
<dbReference type="GO" id="GO:0004017">
    <property type="term" value="F:adenylate kinase activity"/>
    <property type="evidence" value="ECO:0007669"/>
    <property type="project" value="UniProtKB-UniRule"/>
</dbReference>
<dbReference type="GO" id="GO:0005524">
    <property type="term" value="F:ATP binding"/>
    <property type="evidence" value="ECO:0007669"/>
    <property type="project" value="UniProtKB-UniRule"/>
</dbReference>
<dbReference type="GO" id="GO:0044209">
    <property type="term" value="P:AMP salvage"/>
    <property type="evidence" value="ECO:0007669"/>
    <property type="project" value="UniProtKB-UniRule"/>
</dbReference>
<dbReference type="CDD" id="cd01428">
    <property type="entry name" value="ADK"/>
    <property type="match status" value="1"/>
</dbReference>
<dbReference type="Gene3D" id="3.40.50.300">
    <property type="entry name" value="P-loop containing nucleotide triphosphate hydrolases"/>
    <property type="match status" value="1"/>
</dbReference>
<dbReference type="HAMAP" id="MF_00235">
    <property type="entry name" value="Adenylate_kinase_Adk"/>
    <property type="match status" value="1"/>
</dbReference>
<dbReference type="InterPro" id="IPR000850">
    <property type="entry name" value="Adenylat/UMP-CMP_kin"/>
</dbReference>
<dbReference type="InterPro" id="IPR033690">
    <property type="entry name" value="Adenylat_kinase_CS"/>
</dbReference>
<dbReference type="InterPro" id="IPR027417">
    <property type="entry name" value="P-loop_NTPase"/>
</dbReference>
<dbReference type="NCBIfam" id="NF001381">
    <property type="entry name" value="PRK00279.1-3"/>
    <property type="match status" value="1"/>
</dbReference>
<dbReference type="NCBIfam" id="NF011100">
    <property type="entry name" value="PRK14527.1"/>
    <property type="match status" value="1"/>
</dbReference>
<dbReference type="NCBIfam" id="NF011101">
    <property type="entry name" value="PRK14528.1"/>
    <property type="match status" value="1"/>
</dbReference>
<dbReference type="NCBIfam" id="NF011104">
    <property type="entry name" value="PRK14531.1"/>
    <property type="match status" value="1"/>
</dbReference>
<dbReference type="PANTHER" id="PTHR23359">
    <property type="entry name" value="NUCLEOTIDE KINASE"/>
    <property type="match status" value="1"/>
</dbReference>
<dbReference type="Pfam" id="PF00406">
    <property type="entry name" value="ADK"/>
    <property type="match status" value="1"/>
</dbReference>
<dbReference type="PRINTS" id="PR00094">
    <property type="entry name" value="ADENYLTKNASE"/>
</dbReference>
<dbReference type="SUPFAM" id="SSF52540">
    <property type="entry name" value="P-loop containing nucleoside triphosphate hydrolases"/>
    <property type="match status" value="1"/>
</dbReference>
<dbReference type="PROSITE" id="PS00113">
    <property type="entry name" value="ADENYLATE_KINASE"/>
    <property type="match status" value="1"/>
</dbReference>
<gene>
    <name evidence="1" type="primary">adk</name>
    <name type="ordered locus">Tery_2993</name>
</gene>
<organism>
    <name type="scientific">Trichodesmium erythraeum (strain IMS101)</name>
    <dbReference type="NCBI Taxonomy" id="203124"/>
    <lineage>
        <taxon>Bacteria</taxon>
        <taxon>Bacillati</taxon>
        <taxon>Cyanobacteriota</taxon>
        <taxon>Cyanophyceae</taxon>
        <taxon>Oscillatoriophycideae</taxon>
        <taxon>Oscillatoriales</taxon>
        <taxon>Microcoleaceae</taxon>
        <taxon>Trichodesmium</taxon>
    </lineage>
</organism>